<protein>
    <recommendedName>
        <fullName>Basic membrane protein C</fullName>
    </recommendedName>
    <alternativeName>
        <fullName evidence="2">Probable substrate-binding protein BmpC</fullName>
    </alternativeName>
</protein>
<comment type="function">
    <text evidence="2">May be part of an ABC-type nucleoside uptake system involved in the purine salvage pathway.</text>
</comment>
<comment type="subunit">
    <text evidence="1">Monomer.</text>
</comment>
<comment type="subcellular location">
    <subcellularLocation>
        <location evidence="3">Cell inner membrane</location>
        <topology evidence="3">Lipid-anchor</topology>
    </subcellularLocation>
</comment>
<comment type="similarity">
    <text evidence="3">Belongs to the BMP lipoprotein family.</text>
</comment>
<dbReference type="EMBL" id="AF288609">
    <property type="protein sequence ID" value="AAG00583.1"/>
    <property type="molecule type" value="Genomic_DNA"/>
</dbReference>
<dbReference type="EMBL" id="CP002228">
    <property type="protein sequence ID" value="ADQ29530.1"/>
    <property type="molecule type" value="Genomic_DNA"/>
</dbReference>
<dbReference type="RefSeq" id="WP_002656279.1">
    <property type="nucleotide sequence ID" value="NC_017418.1"/>
</dbReference>
<dbReference type="SMR" id="E4QEZ3"/>
<dbReference type="KEGG" id="bbn:BbuN40_0384"/>
<dbReference type="PATRIC" id="fig|521007.3.peg.427"/>
<dbReference type="HOGENOM" id="CLU_038813_0_2_12"/>
<dbReference type="GO" id="GO:0005886">
    <property type="term" value="C:plasma membrane"/>
    <property type="evidence" value="ECO:0007669"/>
    <property type="project" value="UniProtKB-SubCell"/>
</dbReference>
<dbReference type="CDD" id="cd06354">
    <property type="entry name" value="PBP1_PrnA-like"/>
    <property type="match status" value="1"/>
</dbReference>
<dbReference type="Gene3D" id="3.40.50.2300">
    <property type="match status" value="2"/>
</dbReference>
<dbReference type="InterPro" id="IPR050957">
    <property type="entry name" value="BMP_lipoprotein"/>
</dbReference>
<dbReference type="InterPro" id="IPR028082">
    <property type="entry name" value="Peripla_BP_I"/>
</dbReference>
<dbReference type="InterPro" id="IPR003760">
    <property type="entry name" value="PnrA-like"/>
</dbReference>
<dbReference type="PANTHER" id="PTHR34296:SF2">
    <property type="entry name" value="ABC TRANSPORTER GUANOSINE-BINDING PROTEIN NUPN"/>
    <property type="match status" value="1"/>
</dbReference>
<dbReference type="PANTHER" id="PTHR34296">
    <property type="entry name" value="TRANSCRIPTIONAL ACTIVATOR PROTEIN MED"/>
    <property type="match status" value="1"/>
</dbReference>
<dbReference type="Pfam" id="PF02608">
    <property type="entry name" value="Bmp"/>
    <property type="match status" value="1"/>
</dbReference>
<dbReference type="SUPFAM" id="SSF53822">
    <property type="entry name" value="Periplasmic binding protein-like I"/>
    <property type="match status" value="1"/>
</dbReference>
<dbReference type="PROSITE" id="PS51257">
    <property type="entry name" value="PROKAR_LIPOPROTEIN"/>
    <property type="match status" value="1"/>
</dbReference>
<proteinExistence type="inferred from homology"/>
<keyword id="KW-0997">Cell inner membrane</keyword>
<keyword id="KW-1003">Cell membrane</keyword>
<keyword id="KW-0449">Lipoprotein</keyword>
<keyword id="KW-0472">Membrane</keyword>
<keyword id="KW-0564">Palmitate</keyword>
<keyword id="KW-0732">Signal</keyword>
<keyword id="KW-0813">Transport</keyword>
<accession>E4QEZ3</accession>
<accession>O50169</accession>
<accession>Q44859</accession>
<accession>Q93V09</accession>
<evidence type="ECO:0000250" key="1">
    <source>
        <dbReference type="UniProtKB" id="P0CL55"/>
    </source>
</evidence>
<evidence type="ECO:0000250" key="2">
    <source>
        <dbReference type="UniProtKB" id="P0CL65"/>
    </source>
</evidence>
<evidence type="ECO:0000305" key="3"/>
<sequence>MFKRFIFITLSLLVFACFKSNKKSIKSDKVVVGVLAHGSFYDKGYNQSVHDGVVKLRDNFGIKLITKSLRPYPIEGKRLLTVDEAMTEDAYEVQKNPLNLFWLIGYRFSDLSVKLSYERPDIYYGIIDAFDYGDIQVPKNSLAIKFRNEEAAFLAGYIAAKMSRKEKIGFLTGPMSEHLKDFKFGFKAGIFYANPKLRLVSKKAPSLFDKEKGKAMALFMYKEDKVGVIFPIAGITGLGVYDAAKELGPKYYVIGLNQDQSYIAPQNVITSIIKDIGKVIYSISSEYINNRVFKGGIIIDRGLKEGVIEIVKDPDVLNNRLVDEVIDLENKIISGEIIVPDSEYAFDLFKSKL</sequence>
<gene>
    <name type="primary">bmpC</name>
    <name type="ordered locus">BbuN40_0384</name>
</gene>
<reference key="1">
    <citation type="journal article" date="2001" name="Mol. Microbiol.">
        <title>Two independent transcriptional units control the complex and simultaneous expression of the bmp paralogous chromosomal gene family in Borrelia burgdorferi.</title>
        <authorList>
            <person name="Dobrikova E.Y."/>
            <person name="Bugrysheva J."/>
            <person name="Cabello F.C."/>
        </authorList>
    </citation>
    <scope>NUCLEOTIDE SEQUENCE [GENOMIC DNA]</scope>
    <source>
        <strain>N40</strain>
    </source>
</reference>
<reference key="2">
    <citation type="journal article" date="2011" name="J. Bacteriol.">
        <title>Whole-genome sequences of thirteen isolates of Borrelia burgdorferi.</title>
        <authorList>
            <person name="Schutzer S.E."/>
            <person name="Fraser-Liggett C.M."/>
            <person name="Casjens S.R."/>
            <person name="Qiu W.G."/>
            <person name="Dunn J.J."/>
            <person name="Mongodin E.F."/>
            <person name="Luft B.J."/>
        </authorList>
    </citation>
    <scope>NUCLEOTIDE SEQUENCE [LARGE SCALE GENOMIC DNA]</scope>
    <source>
        <strain>N40</strain>
    </source>
</reference>
<feature type="signal peptide" evidence="3">
    <location>
        <begin position="1"/>
        <end position="16"/>
    </location>
</feature>
<feature type="chain" id="PRO_0000406312" description="Basic membrane protein C">
    <location>
        <begin position="17"/>
        <end position="353"/>
    </location>
</feature>
<feature type="lipid moiety-binding region" description="N-palmitoyl cysteine" evidence="3">
    <location>
        <position position="17"/>
    </location>
</feature>
<feature type="lipid moiety-binding region" description="S-diacylglycerol cysteine" evidence="3">
    <location>
        <position position="17"/>
    </location>
</feature>
<organism>
    <name type="scientific">Borreliella burgdorferi (strain N40)</name>
    <name type="common">Borrelia burgdorferi</name>
    <dbReference type="NCBI Taxonomy" id="521007"/>
    <lineage>
        <taxon>Bacteria</taxon>
        <taxon>Pseudomonadati</taxon>
        <taxon>Spirochaetota</taxon>
        <taxon>Spirochaetia</taxon>
        <taxon>Spirochaetales</taxon>
        <taxon>Borreliaceae</taxon>
        <taxon>Borreliella</taxon>
    </lineage>
</organism>
<name>BMPC_BORBN</name>